<feature type="signal peptide" evidence="1">
    <location>
        <begin position="1"/>
        <end position="22"/>
    </location>
</feature>
<feature type="chain" id="PRO_0000282079" description="Uncharacterized lipoprotein SAUSA300_0414">
    <location>
        <begin position="23"/>
        <end position="256"/>
    </location>
</feature>
<feature type="lipid moiety-binding region" description="N-palmitoyl cysteine" evidence="1">
    <location>
        <position position="23"/>
    </location>
</feature>
<feature type="lipid moiety-binding region" description="S-diacylglycerol cysteine" evidence="1">
    <location>
        <position position="23"/>
    </location>
</feature>
<sequence length="256" mass="29913">MKSIKRIGLCISLLILSIFVTSCDGDNKITGDSKETQIKKSFSKTLDMYPIKNLEDLYDKEGYRDGEFKKGDKGMWTIYTDFAKGNKSDELDDEGMVLNLDRNTRTAKGYYFVKKFYEKDKLPDRKNYKVEMKNNKIILLDKVEDPNLKKRIENFKFFGQYANFKDLENYNNGDVSINWNVPSYDVEYKMSNKDENVKQLRSRYNIPTEKAPMLKMHIDGDLKGSSVGYKRLEIDFSKEGRDISVIDYLSYKPAKK</sequence>
<dbReference type="EMBL" id="CP000255">
    <property type="protein sequence ID" value="ABD20586.1"/>
    <property type="molecule type" value="Genomic_DNA"/>
</dbReference>
<dbReference type="SMR" id="Q2FJK1"/>
<dbReference type="KEGG" id="saa:SAUSA300_0414"/>
<dbReference type="HOGENOM" id="CLU_071589_0_1_9"/>
<dbReference type="Proteomes" id="UP000001939">
    <property type="component" value="Chromosome"/>
</dbReference>
<dbReference type="GO" id="GO:0005886">
    <property type="term" value="C:plasma membrane"/>
    <property type="evidence" value="ECO:0007669"/>
    <property type="project" value="UniProtKB-SubCell"/>
</dbReference>
<dbReference type="Gene3D" id="2.50.20.40">
    <property type="match status" value="1"/>
</dbReference>
<dbReference type="InterPro" id="IPR007595">
    <property type="entry name" value="Csa"/>
</dbReference>
<dbReference type="InterPro" id="IPR038641">
    <property type="entry name" value="Csa_sf"/>
</dbReference>
<dbReference type="NCBIfam" id="TIGR01742">
    <property type="entry name" value="SA_tandem_lipo"/>
    <property type="match status" value="1"/>
</dbReference>
<dbReference type="Pfam" id="PF04507">
    <property type="entry name" value="DUF576"/>
    <property type="match status" value="1"/>
</dbReference>
<dbReference type="PROSITE" id="PS51257">
    <property type="entry name" value="PROKAR_LIPOPROTEIN"/>
    <property type="match status" value="1"/>
</dbReference>
<evidence type="ECO:0000255" key="1">
    <source>
        <dbReference type="PROSITE-ProRule" id="PRU00303"/>
    </source>
</evidence>
<evidence type="ECO:0000305" key="2"/>
<accession>Q2FJK1</accession>
<name>Y414_STAA3</name>
<organism>
    <name type="scientific">Staphylococcus aureus (strain USA300)</name>
    <dbReference type="NCBI Taxonomy" id="367830"/>
    <lineage>
        <taxon>Bacteria</taxon>
        <taxon>Bacillati</taxon>
        <taxon>Bacillota</taxon>
        <taxon>Bacilli</taxon>
        <taxon>Bacillales</taxon>
        <taxon>Staphylococcaceae</taxon>
        <taxon>Staphylococcus</taxon>
    </lineage>
</organism>
<reference key="1">
    <citation type="journal article" date="2006" name="Lancet">
        <title>Complete genome sequence of USA300, an epidemic clone of community-acquired meticillin-resistant Staphylococcus aureus.</title>
        <authorList>
            <person name="Diep B.A."/>
            <person name="Gill S.R."/>
            <person name="Chang R.F."/>
            <person name="Phan T.H."/>
            <person name="Chen J.H."/>
            <person name="Davidson M.G."/>
            <person name="Lin F."/>
            <person name="Lin J."/>
            <person name="Carleton H.A."/>
            <person name="Mongodin E.F."/>
            <person name="Sensabaugh G.F."/>
            <person name="Perdreau-Remington F."/>
        </authorList>
    </citation>
    <scope>NUCLEOTIDE SEQUENCE [LARGE SCALE GENOMIC DNA]</scope>
    <source>
        <strain>USA300</strain>
    </source>
</reference>
<gene>
    <name type="ordered locus">SAUSA300_0414</name>
</gene>
<protein>
    <recommendedName>
        <fullName>Uncharacterized lipoprotein SAUSA300_0414</fullName>
    </recommendedName>
</protein>
<proteinExistence type="inferred from homology"/>
<keyword id="KW-1003">Cell membrane</keyword>
<keyword id="KW-0449">Lipoprotein</keyword>
<keyword id="KW-0472">Membrane</keyword>
<keyword id="KW-0564">Palmitate</keyword>
<keyword id="KW-0732">Signal</keyword>
<comment type="subcellular location">
    <subcellularLocation>
        <location evidence="1">Cell membrane</location>
        <topology evidence="1">Lipid-anchor</topology>
    </subcellularLocation>
</comment>
<comment type="similarity">
    <text evidence="2">Belongs to the staphylococcal tandem lipoprotein family.</text>
</comment>